<accession>P39992</accession>
<accession>D3DLM5</accession>
<accession>Q66RC5</accession>
<gene>
    <name type="ordered locus">YEL023C</name>
</gene>
<protein>
    <recommendedName>
        <fullName>Uncharacterized protein YEL023C</fullName>
    </recommendedName>
</protein>
<proteinExistence type="predicted"/>
<sequence length="682" mass="78319">MDSFNYIHGKYKKNGTGGDRSINPSSHSSSGKNIILCFDGTRENFGPQPFTNILKLYNLLENGDSSEQICYYQPGIGSVGFDAVVDVRRRLTISHLQNLLDSMFAFSLDNHICSAYLFLMKYFEPGDRIYMFGFSRGAFIARVLAGMIERVGLLSKGLEEMVKMAWQIYEKWEYDSQPNELQYTSTLAEEFKKTFSRDYEVKIHFQGLFDSVNSVGILRDRLFPCTQRSNIVEHVRHCVSLDERRGKFKQLCFTPMPYIPKLFSLTYCNHITDQCSPVPTSNALMRDLTPENPLIKYTLKSGAHSISNPSPLIPDNPGRLLSSKSEETTELLLDLNSFLEGNSYARDTECSTRGIEAIFQLQSIQGSGTSSRMTMTPDLIEKWFPGDHSDVGGGWAPDCETEENLSNLTLRWILAEAIKFGVKFKPGAIHDFATKHTSIGSLFADTHDYLSFNSPKKCSLLGVSDNEDGAREDKSGRNERMEDCLKNIKETRLSLKDEKEKVKDAFTLKCGHANKFMRLVWWVLELLPIGIRMENKEGKWQNFHTPNLGRSRYVPEYVSLHWSVYWRIKFDRRYRPDNMPEYVRQLFQDLEGIDLKSNKVSNKYDKQDNSNGSEINGGFFDNEEGQELHMGQKASYFATTYNSRLFDSKYSQLKKKFMDWDSNSWTDIPDDLKIYLQQDESL</sequence>
<feature type="chain" id="PRO_0000202610" description="Uncharacterized protein YEL023C">
    <location>
        <begin position="1"/>
        <end position="682"/>
    </location>
</feature>
<feature type="sequence conflict" description="In Ref. 3; AAU09714." evidence="1" ref="3">
    <original>S</original>
    <variation>Y</variation>
    <location>
        <position position="281"/>
    </location>
</feature>
<keyword id="KW-1185">Reference proteome</keyword>
<evidence type="ECO:0000305" key="1"/>
<name>YEC3_YEAST</name>
<organism>
    <name type="scientific">Saccharomyces cerevisiae (strain ATCC 204508 / S288c)</name>
    <name type="common">Baker's yeast</name>
    <dbReference type="NCBI Taxonomy" id="559292"/>
    <lineage>
        <taxon>Eukaryota</taxon>
        <taxon>Fungi</taxon>
        <taxon>Dikarya</taxon>
        <taxon>Ascomycota</taxon>
        <taxon>Saccharomycotina</taxon>
        <taxon>Saccharomycetes</taxon>
        <taxon>Saccharomycetales</taxon>
        <taxon>Saccharomycetaceae</taxon>
        <taxon>Saccharomyces</taxon>
    </lineage>
</organism>
<dbReference type="EMBL" id="U18530">
    <property type="protein sequence ID" value="AAB64500.1"/>
    <property type="molecule type" value="Genomic_DNA"/>
</dbReference>
<dbReference type="EMBL" id="AY723797">
    <property type="protein sequence ID" value="AAU09714.1"/>
    <property type="molecule type" value="Genomic_DNA"/>
</dbReference>
<dbReference type="EMBL" id="BK006939">
    <property type="protein sequence ID" value="DAA07629.1"/>
    <property type="molecule type" value="Genomic_DNA"/>
</dbReference>
<dbReference type="PIR" id="S50436">
    <property type="entry name" value="S50436"/>
</dbReference>
<dbReference type="RefSeq" id="NP_010891.1">
    <property type="nucleotide sequence ID" value="NM_001178838.1"/>
</dbReference>
<dbReference type="BioGRID" id="36706">
    <property type="interactions" value="23"/>
</dbReference>
<dbReference type="DIP" id="DIP-1248N"/>
<dbReference type="FunCoup" id="P39992">
    <property type="interactions" value="49"/>
</dbReference>
<dbReference type="IntAct" id="P39992">
    <property type="interactions" value="5"/>
</dbReference>
<dbReference type="MINT" id="P39992"/>
<dbReference type="STRING" id="4932.YEL023C"/>
<dbReference type="PaxDb" id="4932-YEL023C"/>
<dbReference type="PeptideAtlas" id="P39992"/>
<dbReference type="EnsemblFungi" id="YEL023C_mRNA">
    <property type="protein sequence ID" value="YEL023C"/>
    <property type="gene ID" value="YEL023C"/>
</dbReference>
<dbReference type="GeneID" id="856690"/>
<dbReference type="KEGG" id="sce:YEL023C"/>
<dbReference type="AGR" id="SGD:S000000749"/>
<dbReference type="SGD" id="S000000749">
    <property type="gene designation" value="YEL023C"/>
</dbReference>
<dbReference type="VEuPathDB" id="FungiDB:YEL023C"/>
<dbReference type="eggNOG" id="ENOG502QPR9">
    <property type="taxonomic scope" value="Eukaryota"/>
</dbReference>
<dbReference type="HOGENOM" id="CLU_005049_0_3_1"/>
<dbReference type="InParanoid" id="P39992"/>
<dbReference type="OMA" id="FENAWMQ"/>
<dbReference type="OrthoDB" id="3162439at2759"/>
<dbReference type="BioCyc" id="YEAST:G3O-30147-MONOMER"/>
<dbReference type="BioGRID-ORCS" id="856690">
    <property type="hits" value="1 hit in 10 CRISPR screens"/>
</dbReference>
<dbReference type="PRO" id="PR:P39992"/>
<dbReference type="Proteomes" id="UP000002311">
    <property type="component" value="Chromosome V"/>
</dbReference>
<dbReference type="RNAct" id="P39992">
    <property type="molecule type" value="protein"/>
</dbReference>
<dbReference type="InterPro" id="IPR018712">
    <property type="entry name" value="Tle1-like_cat"/>
</dbReference>
<dbReference type="PANTHER" id="PTHR33840">
    <property type="match status" value="1"/>
</dbReference>
<dbReference type="PANTHER" id="PTHR33840:SF2">
    <property type="entry name" value="TLE1 PHOSPHOLIPASE DOMAIN-CONTAINING PROTEIN"/>
    <property type="match status" value="1"/>
</dbReference>
<dbReference type="Pfam" id="PF09994">
    <property type="entry name" value="T6SS_Tle1-like_cat"/>
    <property type="match status" value="1"/>
</dbReference>
<reference key="1">
    <citation type="journal article" date="1997" name="Nature">
        <title>The nucleotide sequence of Saccharomyces cerevisiae chromosome V.</title>
        <authorList>
            <person name="Dietrich F.S."/>
            <person name="Mulligan J.T."/>
            <person name="Hennessy K.M."/>
            <person name="Yelton M.A."/>
            <person name="Allen E."/>
            <person name="Araujo R."/>
            <person name="Aviles E."/>
            <person name="Berno A."/>
            <person name="Brennan T."/>
            <person name="Carpenter J."/>
            <person name="Chen E."/>
            <person name="Cherry J.M."/>
            <person name="Chung E."/>
            <person name="Duncan M."/>
            <person name="Guzman E."/>
            <person name="Hartzell G."/>
            <person name="Hunicke-Smith S."/>
            <person name="Hyman R.W."/>
            <person name="Kayser A."/>
            <person name="Komp C."/>
            <person name="Lashkari D."/>
            <person name="Lew H."/>
            <person name="Lin D."/>
            <person name="Mosedale D."/>
            <person name="Nakahara K."/>
            <person name="Namath A."/>
            <person name="Norgren R."/>
            <person name="Oefner P."/>
            <person name="Oh C."/>
            <person name="Petel F.X."/>
            <person name="Roberts D."/>
            <person name="Sehl P."/>
            <person name="Schramm S."/>
            <person name="Shogren T."/>
            <person name="Smith V."/>
            <person name="Taylor P."/>
            <person name="Wei Y."/>
            <person name="Botstein D."/>
            <person name="Davis R.W."/>
        </authorList>
    </citation>
    <scope>NUCLEOTIDE SEQUENCE [LARGE SCALE GENOMIC DNA]</scope>
    <source>
        <strain>ATCC 204508 / S288c</strain>
    </source>
</reference>
<reference key="2">
    <citation type="journal article" date="2014" name="G3 (Bethesda)">
        <title>The reference genome sequence of Saccharomyces cerevisiae: Then and now.</title>
        <authorList>
            <person name="Engel S.R."/>
            <person name="Dietrich F.S."/>
            <person name="Fisk D.G."/>
            <person name="Binkley G."/>
            <person name="Balakrishnan R."/>
            <person name="Costanzo M.C."/>
            <person name="Dwight S.S."/>
            <person name="Hitz B.C."/>
            <person name="Karra K."/>
            <person name="Nash R.S."/>
            <person name="Weng S."/>
            <person name="Wong E.D."/>
            <person name="Lloyd P."/>
            <person name="Skrzypek M.S."/>
            <person name="Miyasato S.R."/>
            <person name="Simison M."/>
            <person name="Cherry J.M."/>
        </authorList>
    </citation>
    <scope>GENOME REANNOTATION</scope>
    <source>
        <strain>ATCC 204508 / S288c</strain>
    </source>
</reference>
<reference key="3">
    <citation type="journal article" date="2007" name="Genome Res.">
        <title>Approaching a complete repository of sequence-verified protein-encoding clones for Saccharomyces cerevisiae.</title>
        <authorList>
            <person name="Hu Y."/>
            <person name="Rolfs A."/>
            <person name="Bhullar B."/>
            <person name="Murthy T.V.S."/>
            <person name="Zhu C."/>
            <person name="Berger M.F."/>
            <person name="Camargo A.A."/>
            <person name="Kelley F."/>
            <person name="McCarron S."/>
            <person name="Jepson D."/>
            <person name="Richardson A."/>
            <person name="Raphael J."/>
            <person name="Moreira D."/>
            <person name="Taycher E."/>
            <person name="Zuo D."/>
            <person name="Mohr S."/>
            <person name="Kane M.F."/>
            <person name="Williamson J."/>
            <person name="Simpson A.J.G."/>
            <person name="Bulyk M.L."/>
            <person name="Harlow E."/>
            <person name="Marsischky G."/>
            <person name="Kolodner R.D."/>
            <person name="LaBaer J."/>
        </authorList>
    </citation>
    <scope>NUCLEOTIDE SEQUENCE [GENOMIC DNA]</scope>
    <source>
        <strain>ATCC 204508 / S288c</strain>
    </source>
</reference>